<sequence>MRISILQLVPVVGYIGFALGELYKPKNSISCSPNNPCPAEWPCCSPYNECGAGPICVGGCNVRSSFDEESCAPIPALVASQKLEFVSTPKVPKFIVNYQPKPPIREGNGPNKANTKVGVVEGELNSKRIIHYAKFLVTPDSKEAEKMLEDFDFTHSGYTSIEASSGNIVLAMPKKTTGSLITSTRSFLYGKASVRMKTARSRGVVTAFDLTSAIGDEIDFEWLGGDLMTAQSNYYSQGHLDYTRMQRFPVGADTWATYHTYEIDWDPDRIIWYVDGKIARTVLKKDTWDPISKEYRYPQTPMRLEIAVWPGGSETNGPGTINWAGGLIDWENSPDIIEKGQFTAHVEQITVTPYQNKFTEQVQFCIKAKKKAPTFSQKDLSRVVVSYNRQDRLNHHDEGSLKWDCFVTPKINDWLSSWKRSK</sequence>
<proteinExistence type="evidence at transcript level"/>
<dbReference type="EC" id="3.2.-.-"/>
<dbReference type="EMBL" id="U14913">
    <property type="protein sequence ID" value="AAB67443.1"/>
    <property type="molecule type" value="Genomic_DNA"/>
</dbReference>
<dbReference type="EMBL" id="BK006945">
    <property type="protein sequence ID" value="DAA09530.1"/>
    <property type="molecule type" value="Genomic_DNA"/>
</dbReference>
<dbReference type="PIR" id="S48564">
    <property type="entry name" value="S48564"/>
</dbReference>
<dbReference type="RefSeq" id="NP_013314.1">
    <property type="nucleotide sequence ID" value="NM_001182100.1"/>
</dbReference>
<dbReference type="SMR" id="Q05790"/>
<dbReference type="BioGRID" id="31481">
    <property type="interactions" value="30"/>
</dbReference>
<dbReference type="DIP" id="DIP-822N"/>
<dbReference type="FunCoup" id="Q05790">
    <property type="interactions" value="871"/>
</dbReference>
<dbReference type="IntAct" id="Q05790">
    <property type="interactions" value="1"/>
</dbReference>
<dbReference type="MINT" id="Q05790"/>
<dbReference type="STRING" id="4932.YLR213C"/>
<dbReference type="CAZy" id="CBM18">
    <property type="family name" value="Carbohydrate-Binding Module Family 18"/>
</dbReference>
<dbReference type="CAZy" id="GH16">
    <property type="family name" value="Glycoside Hydrolase Family 16"/>
</dbReference>
<dbReference type="PaxDb" id="4932-YLR213C"/>
<dbReference type="EnsemblFungi" id="YLR213C_mRNA">
    <property type="protein sequence ID" value="YLR213C"/>
    <property type="gene ID" value="YLR213C"/>
</dbReference>
<dbReference type="GeneID" id="850910"/>
<dbReference type="KEGG" id="sce:YLR213C"/>
<dbReference type="AGR" id="SGD:S000004203"/>
<dbReference type="SGD" id="S000004203">
    <property type="gene designation" value="CRR1"/>
</dbReference>
<dbReference type="VEuPathDB" id="FungiDB:YLR213C"/>
<dbReference type="eggNOG" id="ENOG502QVQI">
    <property type="taxonomic scope" value="Eukaryota"/>
</dbReference>
<dbReference type="GeneTree" id="ENSGT00940000176705"/>
<dbReference type="HOGENOM" id="CLU_039093_0_0_1"/>
<dbReference type="InParanoid" id="Q05790"/>
<dbReference type="OMA" id="WPCCSPY"/>
<dbReference type="OrthoDB" id="4781at2759"/>
<dbReference type="BioCyc" id="YEAST:G3O-32330-MONOMER"/>
<dbReference type="BioGRID-ORCS" id="850910">
    <property type="hits" value="0 hits in 10 CRISPR screens"/>
</dbReference>
<dbReference type="PRO" id="PR:Q05790"/>
<dbReference type="Proteomes" id="UP000002311">
    <property type="component" value="Chromosome XII"/>
</dbReference>
<dbReference type="RNAct" id="Q05790">
    <property type="molecule type" value="protein"/>
</dbReference>
<dbReference type="GO" id="GO:0005619">
    <property type="term" value="C:ascospore wall"/>
    <property type="evidence" value="ECO:0000314"/>
    <property type="project" value="SGD"/>
</dbReference>
<dbReference type="GO" id="GO:0009277">
    <property type="term" value="C:fungal-type cell wall"/>
    <property type="evidence" value="ECO:0000318"/>
    <property type="project" value="GO_Central"/>
</dbReference>
<dbReference type="GO" id="GO:0000324">
    <property type="term" value="C:fungal-type vacuole"/>
    <property type="evidence" value="ECO:0007005"/>
    <property type="project" value="SGD"/>
</dbReference>
<dbReference type="GO" id="GO:0016757">
    <property type="term" value="F:glycosyltransferase activity"/>
    <property type="evidence" value="ECO:0000318"/>
    <property type="project" value="GO_Central"/>
</dbReference>
<dbReference type="GO" id="GO:0016810">
    <property type="term" value="F:hydrolase activity, acting on carbon-nitrogen (but not peptide) bonds"/>
    <property type="evidence" value="ECO:0000250"/>
    <property type="project" value="SGD"/>
</dbReference>
<dbReference type="GO" id="GO:0004553">
    <property type="term" value="F:hydrolase activity, hydrolyzing O-glycosyl compounds"/>
    <property type="evidence" value="ECO:0007669"/>
    <property type="project" value="InterPro"/>
</dbReference>
<dbReference type="GO" id="GO:0030476">
    <property type="term" value="P:ascospore wall assembly"/>
    <property type="evidence" value="ECO:0000315"/>
    <property type="project" value="SGD"/>
</dbReference>
<dbReference type="GO" id="GO:0005975">
    <property type="term" value="P:carbohydrate metabolic process"/>
    <property type="evidence" value="ECO:0007669"/>
    <property type="project" value="InterPro"/>
</dbReference>
<dbReference type="GO" id="GO:0006030">
    <property type="term" value="P:chitin metabolic process"/>
    <property type="evidence" value="ECO:0000318"/>
    <property type="project" value="GO_Central"/>
</dbReference>
<dbReference type="GO" id="GO:0031505">
    <property type="term" value="P:fungal-type cell wall organization"/>
    <property type="evidence" value="ECO:0000318"/>
    <property type="project" value="GO_Central"/>
</dbReference>
<dbReference type="CDD" id="cd06923">
    <property type="entry name" value="ChtBD1_GH16"/>
    <property type="match status" value="1"/>
</dbReference>
<dbReference type="CDD" id="cd02183">
    <property type="entry name" value="GH16_fungal_CRH1_transglycosylase"/>
    <property type="match status" value="1"/>
</dbReference>
<dbReference type="FunFam" id="2.60.120.200:FF:000159">
    <property type="entry name" value="Glycosidase"/>
    <property type="match status" value="1"/>
</dbReference>
<dbReference type="Gene3D" id="2.60.120.200">
    <property type="match status" value="1"/>
</dbReference>
<dbReference type="InterPro" id="IPR008264">
    <property type="entry name" value="Beta_glucanase"/>
</dbReference>
<dbReference type="InterPro" id="IPR013320">
    <property type="entry name" value="ConA-like_dom_sf"/>
</dbReference>
<dbReference type="InterPro" id="IPR000757">
    <property type="entry name" value="GH16"/>
</dbReference>
<dbReference type="InterPro" id="IPR050546">
    <property type="entry name" value="Glycosyl_Hydrlase_16"/>
</dbReference>
<dbReference type="PANTHER" id="PTHR10963:SF69">
    <property type="entry name" value="GLYCOSIDASE CRR1-RELATED"/>
    <property type="match status" value="1"/>
</dbReference>
<dbReference type="PANTHER" id="PTHR10963">
    <property type="entry name" value="GLYCOSYL HYDROLASE-RELATED"/>
    <property type="match status" value="1"/>
</dbReference>
<dbReference type="Pfam" id="PF00722">
    <property type="entry name" value="Glyco_hydro_16"/>
    <property type="match status" value="1"/>
</dbReference>
<dbReference type="PRINTS" id="PR00737">
    <property type="entry name" value="GLHYDRLASE16"/>
</dbReference>
<dbReference type="SUPFAM" id="SSF49899">
    <property type="entry name" value="Concanavalin A-like lectins/glucanases"/>
    <property type="match status" value="1"/>
</dbReference>
<dbReference type="PROSITE" id="PS51762">
    <property type="entry name" value="GH16_2"/>
    <property type="match status" value="1"/>
</dbReference>
<evidence type="ECO:0000250" key="1"/>
<evidence type="ECO:0000255" key="2"/>
<evidence type="ECO:0000255" key="3">
    <source>
        <dbReference type="PROSITE-ProRule" id="PRU01098"/>
    </source>
</evidence>
<evidence type="ECO:0000269" key="4">
    <source>
    </source>
</evidence>
<evidence type="ECO:0000269" key="5">
    <source>
    </source>
</evidence>
<evidence type="ECO:0000269" key="6">
    <source>
    </source>
</evidence>
<evidence type="ECO:0000269" key="7">
    <source>
    </source>
</evidence>
<evidence type="ECO:0000305" key="8"/>
<feature type="signal peptide" evidence="2">
    <location>
        <begin position="1"/>
        <end position="20"/>
    </location>
</feature>
<feature type="chain" id="PRO_0000228141" description="Probable glycosidase CRR1">
    <location>
        <begin position="21"/>
        <end position="422"/>
    </location>
</feature>
<feature type="domain" description="GH16" evidence="3">
    <location>
        <begin position="67"/>
        <end position="339"/>
    </location>
</feature>
<feature type="active site" description="Nucleophile" evidence="1">
    <location>
        <position position="217"/>
    </location>
</feature>
<feature type="active site" description="Proton donor" evidence="1">
    <location>
        <position position="221"/>
    </location>
</feature>
<comment type="function">
    <text evidence="4 6 7">Spore specific glycosidase involved in spore wall assembly during sporulation. May be involved in copper import.</text>
</comment>
<comment type="subcellular location">
    <subcellularLocation>
        <location evidence="6">Spore wall</location>
    </subcellularLocation>
    <text>Spore wall envelope.</text>
</comment>
<comment type="developmental stage">
    <text evidence="4 6">Expressed in spores.</text>
</comment>
<comment type="induction">
    <text evidence="5">Expression is increased in low copper conditions, probably through the transcription regulation by the copper regulon transcription factor MAC1.</text>
</comment>
<comment type="similarity">
    <text evidence="8">Belongs to the glycosyl hydrolase 16 family. CRR1 subfamily.</text>
</comment>
<organism>
    <name type="scientific">Saccharomyces cerevisiae (strain ATCC 204508 / S288c)</name>
    <name type="common">Baker's yeast</name>
    <dbReference type="NCBI Taxonomy" id="559292"/>
    <lineage>
        <taxon>Eukaryota</taxon>
        <taxon>Fungi</taxon>
        <taxon>Dikarya</taxon>
        <taxon>Ascomycota</taxon>
        <taxon>Saccharomycotina</taxon>
        <taxon>Saccharomycetes</taxon>
        <taxon>Saccharomycetales</taxon>
        <taxon>Saccharomycetaceae</taxon>
        <taxon>Saccharomyces</taxon>
    </lineage>
</organism>
<keyword id="KW-0326">Glycosidase</keyword>
<keyword id="KW-0378">Hydrolase</keyword>
<keyword id="KW-1185">Reference proteome</keyword>
<keyword id="KW-0732">Signal</keyword>
<keyword id="KW-0749">Sporulation</keyword>
<accession>Q05790</accession>
<accession>D6VYL4</accession>
<reference key="1">
    <citation type="journal article" date="1997" name="Nature">
        <title>The nucleotide sequence of Saccharomyces cerevisiae chromosome XII.</title>
        <authorList>
            <person name="Johnston M."/>
            <person name="Hillier L.W."/>
            <person name="Riles L."/>
            <person name="Albermann K."/>
            <person name="Andre B."/>
            <person name="Ansorge W."/>
            <person name="Benes V."/>
            <person name="Brueckner M."/>
            <person name="Delius H."/>
            <person name="Dubois E."/>
            <person name="Duesterhoeft A."/>
            <person name="Entian K.-D."/>
            <person name="Floeth M."/>
            <person name="Goffeau A."/>
            <person name="Hebling U."/>
            <person name="Heumann K."/>
            <person name="Heuss-Neitzel D."/>
            <person name="Hilbert H."/>
            <person name="Hilger F."/>
            <person name="Kleine K."/>
            <person name="Koetter P."/>
            <person name="Louis E.J."/>
            <person name="Messenguy F."/>
            <person name="Mewes H.-W."/>
            <person name="Miosga T."/>
            <person name="Moestl D."/>
            <person name="Mueller-Auer S."/>
            <person name="Nentwich U."/>
            <person name="Obermaier B."/>
            <person name="Piravandi E."/>
            <person name="Pohl T.M."/>
            <person name="Portetelle D."/>
            <person name="Purnelle B."/>
            <person name="Rechmann S."/>
            <person name="Rieger M."/>
            <person name="Rinke M."/>
            <person name="Rose M."/>
            <person name="Scharfe M."/>
            <person name="Scherens B."/>
            <person name="Scholler P."/>
            <person name="Schwager C."/>
            <person name="Schwarz S."/>
            <person name="Underwood A.P."/>
            <person name="Urrestarazu L.A."/>
            <person name="Vandenbol M."/>
            <person name="Verhasselt P."/>
            <person name="Vierendeels F."/>
            <person name="Voet M."/>
            <person name="Volckaert G."/>
            <person name="Voss H."/>
            <person name="Wambutt R."/>
            <person name="Wedler E."/>
            <person name="Wedler H."/>
            <person name="Zimmermann F.K."/>
            <person name="Zollner A."/>
            <person name="Hani J."/>
            <person name="Hoheisel J.D."/>
        </authorList>
    </citation>
    <scope>NUCLEOTIDE SEQUENCE [LARGE SCALE GENOMIC DNA]</scope>
    <source>
        <strain>ATCC 204508 / S288c</strain>
    </source>
</reference>
<reference key="2">
    <citation type="journal article" date="2014" name="G3 (Bethesda)">
        <title>The reference genome sequence of Saccharomyces cerevisiae: Then and now.</title>
        <authorList>
            <person name="Engel S.R."/>
            <person name="Dietrich F.S."/>
            <person name="Fisk D.G."/>
            <person name="Binkley G."/>
            <person name="Balakrishnan R."/>
            <person name="Costanzo M.C."/>
            <person name="Dwight S.S."/>
            <person name="Hitz B.C."/>
            <person name="Karra K."/>
            <person name="Nash R.S."/>
            <person name="Weng S."/>
            <person name="Wong E.D."/>
            <person name="Lloyd P."/>
            <person name="Skrzypek M.S."/>
            <person name="Miyasato S.R."/>
            <person name="Simison M."/>
            <person name="Cherry J.M."/>
        </authorList>
    </citation>
    <scope>GENOME REANNOTATION</scope>
    <source>
        <strain>ATCC 204508 / S288c</strain>
    </source>
</reference>
<reference key="3">
    <citation type="journal article" date="2000" name="J. Biol. Chem.">
        <title>Identification of the copper regulon in Saccharomyces cerevisiae by DNA microarrays.</title>
        <authorList>
            <person name="Gross C."/>
            <person name="Kelleher M."/>
            <person name="Iyer V.R."/>
            <person name="Brown P.O."/>
            <person name="Winge D.R."/>
        </authorList>
    </citation>
    <scope>INDUCTION</scope>
</reference>
<reference key="4">
    <citation type="journal article" date="2000" name="Mol. Cell. Biol.">
        <title>A novel family of cell wall-related proteins regulated differently during the yeast life cycle.</title>
        <authorList>
            <person name="Rodriguez-Pena J.M."/>
            <person name="Cid V.J."/>
            <person name="Arroyo J."/>
            <person name="Nombela C."/>
        </authorList>
    </citation>
    <scope>FUNCTION</scope>
    <scope>DEVELOPMENTAL STAGE</scope>
</reference>
<reference key="5">
    <citation type="journal article" date="2004" name="Microbiology">
        <title>CRR1, a gene encoding a putative transglycosidase, is required for proper spore wall assembly in Saccharomyces cerevisiae.</title>
        <authorList>
            <person name="Gomez-Esquer F."/>
            <person name="Rodriguez-Pena J.M."/>
            <person name="Diaz G."/>
            <person name="Rodriguez E."/>
            <person name="Briza P."/>
            <person name="Nombela C."/>
            <person name="Arroyo J."/>
        </authorList>
    </citation>
    <scope>DEVELOPMENTAL STAGE</scope>
    <scope>SUBCELLULAR LOCATION</scope>
    <scope>FUNCTION</scope>
</reference>
<reference key="6">
    <citation type="journal article" date="2005" name="Physiol. Genomics">
        <title>Gene expression profiling and phenotype analyses of S. cerevisiae in response to changing copper reveals six genes with new roles in copper and iron metabolism.</title>
        <authorList>
            <person name="van Bakel H."/>
            <person name="Strengman E."/>
            <person name="Wijmenga C."/>
            <person name="Holstege F.C.P."/>
        </authorList>
    </citation>
    <scope>FUNCTION</scope>
</reference>
<gene>
    <name type="primary">CRR1</name>
    <name type="ordered locus">YLR213C</name>
</gene>
<protein>
    <recommendedName>
        <fullName>Probable glycosidase CRR1</fullName>
        <ecNumber>3.2.-.-</ecNumber>
    </recommendedName>
    <alternativeName>
        <fullName>CRH-related protein 1</fullName>
    </alternativeName>
</protein>
<name>CRR1_YEAST</name>